<dbReference type="EC" id="4.3.1.3" evidence="1"/>
<dbReference type="EMBL" id="BX571869">
    <property type="protein sequence ID" value="CAE15566.1"/>
    <property type="molecule type" value="Genomic_DNA"/>
</dbReference>
<dbReference type="RefSeq" id="WP_011147399.1">
    <property type="nucleotide sequence ID" value="NC_005126.1"/>
</dbReference>
<dbReference type="SMR" id="Q7N296"/>
<dbReference type="STRING" id="243265.plu3192"/>
<dbReference type="GeneID" id="48849452"/>
<dbReference type="KEGG" id="plu:plu3192"/>
<dbReference type="eggNOG" id="COG2986">
    <property type="taxonomic scope" value="Bacteria"/>
</dbReference>
<dbReference type="HOGENOM" id="CLU_014801_4_0_6"/>
<dbReference type="OrthoDB" id="9806955at2"/>
<dbReference type="UniPathway" id="UPA00379">
    <property type="reaction ID" value="UER00549"/>
</dbReference>
<dbReference type="Proteomes" id="UP000002514">
    <property type="component" value="Chromosome"/>
</dbReference>
<dbReference type="GO" id="GO:0005737">
    <property type="term" value="C:cytoplasm"/>
    <property type="evidence" value="ECO:0007669"/>
    <property type="project" value="UniProtKB-SubCell"/>
</dbReference>
<dbReference type="GO" id="GO:0004397">
    <property type="term" value="F:histidine ammonia-lyase activity"/>
    <property type="evidence" value="ECO:0007669"/>
    <property type="project" value="UniProtKB-UniRule"/>
</dbReference>
<dbReference type="GO" id="GO:0019556">
    <property type="term" value="P:L-histidine catabolic process to glutamate and formamide"/>
    <property type="evidence" value="ECO:0007669"/>
    <property type="project" value="UniProtKB-UniPathway"/>
</dbReference>
<dbReference type="GO" id="GO:0019557">
    <property type="term" value="P:L-histidine catabolic process to glutamate and formate"/>
    <property type="evidence" value="ECO:0007669"/>
    <property type="project" value="UniProtKB-UniPathway"/>
</dbReference>
<dbReference type="CDD" id="cd00332">
    <property type="entry name" value="PAL-HAL"/>
    <property type="match status" value="1"/>
</dbReference>
<dbReference type="FunFam" id="1.10.275.10:FF:000005">
    <property type="entry name" value="Histidine ammonia-lyase"/>
    <property type="match status" value="1"/>
</dbReference>
<dbReference type="FunFam" id="1.20.200.10:FF:000003">
    <property type="entry name" value="Histidine ammonia-lyase"/>
    <property type="match status" value="1"/>
</dbReference>
<dbReference type="Gene3D" id="1.20.200.10">
    <property type="entry name" value="Fumarase/aspartase (Central domain)"/>
    <property type="match status" value="1"/>
</dbReference>
<dbReference type="Gene3D" id="1.10.275.10">
    <property type="entry name" value="Fumarase/aspartase (N-terminal domain)"/>
    <property type="match status" value="1"/>
</dbReference>
<dbReference type="HAMAP" id="MF_00229">
    <property type="entry name" value="His_ammonia_lyase"/>
    <property type="match status" value="1"/>
</dbReference>
<dbReference type="InterPro" id="IPR001106">
    <property type="entry name" value="Aromatic_Lyase"/>
</dbReference>
<dbReference type="InterPro" id="IPR024083">
    <property type="entry name" value="Fumarase/histidase_N"/>
</dbReference>
<dbReference type="InterPro" id="IPR005921">
    <property type="entry name" value="HutH"/>
</dbReference>
<dbReference type="InterPro" id="IPR008948">
    <property type="entry name" value="L-Aspartase-like"/>
</dbReference>
<dbReference type="InterPro" id="IPR022313">
    <property type="entry name" value="Phe/His_NH3-lyase_AS"/>
</dbReference>
<dbReference type="NCBIfam" id="TIGR01225">
    <property type="entry name" value="hutH"/>
    <property type="match status" value="1"/>
</dbReference>
<dbReference type="NCBIfam" id="NF006871">
    <property type="entry name" value="PRK09367.1"/>
    <property type="match status" value="1"/>
</dbReference>
<dbReference type="PANTHER" id="PTHR10362">
    <property type="entry name" value="HISTIDINE AMMONIA-LYASE"/>
    <property type="match status" value="1"/>
</dbReference>
<dbReference type="Pfam" id="PF00221">
    <property type="entry name" value="Lyase_aromatic"/>
    <property type="match status" value="1"/>
</dbReference>
<dbReference type="SUPFAM" id="SSF48557">
    <property type="entry name" value="L-aspartase-like"/>
    <property type="match status" value="1"/>
</dbReference>
<dbReference type="PROSITE" id="PS00488">
    <property type="entry name" value="PAL_HISTIDASE"/>
    <property type="match status" value="1"/>
</dbReference>
<feature type="chain" id="PRO_0000161013" description="Histidine ammonia-lyase">
    <location>
        <begin position="1"/>
        <end position="514"/>
    </location>
</feature>
<feature type="modified residue" description="2,3-didehydroalanine (Ser)" evidence="1">
    <location>
        <position position="144"/>
    </location>
</feature>
<feature type="cross-link" description="5-imidazolinone (Ala-Gly)" evidence="1">
    <location>
        <begin position="143"/>
        <end position="145"/>
    </location>
</feature>
<protein>
    <recommendedName>
        <fullName evidence="1">Histidine ammonia-lyase</fullName>
        <shortName evidence="1">Histidase</shortName>
        <ecNumber evidence="1">4.3.1.3</ecNumber>
    </recommendedName>
</protein>
<name>HUTH_PHOLL</name>
<sequence length="514" mass="55339">MKQLTIYPGKLTLDELRQVYLQPVKITLDSQIFPAIERSVECVNAILAENRTAYGINTGFGLLASTRIEEDNLEKLQRSLVVSHAAGVGKALDDNMTRLIMVLKINSLSRGYSGIRLAVIQALIALVNAEIYPHIPCKGSVGASGDLAPLAHMSLLLLGEGQARYQGEWLPAKEALAKANLQPITLAAKEGLALLNGTQVSTAFALRGLFEAEDLLAAAIVCGSLSVEAALGSRKPFDARVHVVRGQQGQIDVAALYRHVLEESSELSDSHINCPKVQDPYSLRCQPQVMGACLTQLRHAADVILTEANAVSDNPLVFAEQGEVISGGNFHAEPVAMASDNLALVLAEIGALSERRIALLMDSHMSQLPPFLVENGGVNSGFMIAQVTAAALASENKALAHPASVDSLPTSANQEDHVSMAPAAGRRLWEMAENTRGILAIEWLSACQGIDFRNGLKSSPILEEARVILRAKVDYYDQDRFFAPDIDAAVKLLAEQHLSSLLPSGQILQRKNNR</sequence>
<organism>
    <name type="scientific">Photorhabdus laumondii subsp. laumondii (strain DSM 15139 / CIP 105565 / TT01)</name>
    <name type="common">Photorhabdus luminescens subsp. laumondii</name>
    <dbReference type="NCBI Taxonomy" id="243265"/>
    <lineage>
        <taxon>Bacteria</taxon>
        <taxon>Pseudomonadati</taxon>
        <taxon>Pseudomonadota</taxon>
        <taxon>Gammaproteobacteria</taxon>
        <taxon>Enterobacterales</taxon>
        <taxon>Morganellaceae</taxon>
        <taxon>Photorhabdus</taxon>
    </lineage>
</organism>
<keyword id="KW-0963">Cytoplasm</keyword>
<keyword id="KW-0369">Histidine metabolism</keyword>
<keyword id="KW-0456">Lyase</keyword>
<keyword id="KW-1185">Reference proteome</keyword>
<reference key="1">
    <citation type="journal article" date="2003" name="Nat. Biotechnol.">
        <title>The genome sequence of the entomopathogenic bacterium Photorhabdus luminescens.</title>
        <authorList>
            <person name="Duchaud E."/>
            <person name="Rusniok C."/>
            <person name="Frangeul L."/>
            <person name="Buchrieser C."/>
            <person name="Givaudan A."/>
            <person name="Taourit S."/>
            <person name="Bocs S."/>
            <person name="Boursaux-Eude C."/>
            <person name="Chandler M."/>
            <person name="Charles J.-F."/>
            <person name="Dassa E."/>
            <person name="Derose R."/>
            <person name="Derzelle S."/>
            <person name="Freyssinet G."/>
            <person name="Gaudriault S."/>
            <person name="Medigue C."/>
            <person name="Lanois A."/>
            <person name="Powell K."/>
            <person name="Siguier P."/>
            <person name="Vincent R."/>
            <person name="Wingate V."/>
            <person name="Zouine M."/>
            <person name="Glaser P."/>
            <person name="Boemare N."/>
            <person name="Danchin A."/>
            <person name="Kunst F."/>
        </authorList>
    </citation>
    <scope>NUCLEOTIDE SEQUENCE [LARGE SCALE GENOMIC DNA]</scope>
    <source>
        <strain>DSM 15139 / CIP 105565 / TT01</strain>
    </source>
</reference>
<accession>Q7N296</accession>
<gene>
    <name evidence="1" type="primary">hutH</name>
    <name type="ordered locus">plu3192</name>
</gene>
<comment type="catalytic activity">
    <reaction evidence="1">
        <text>L-histidine = trans-urocanate + NH4(+)</text>
        <dbReference type="Rhea" id="RHEA:21232"/>
        <dbReference type="ChEBI" id="CHEBI:17771"/>
        <dbReference type="ChEBI" id="CHEBI:28938"/>
        <dbReference type="ChEBI" id="CHEBI:57595"/>
        <dbReference type="EC" id="4.3.1.3"/>
    </reaction>
</comment>
<comment type="pathway">
    <text evidence="1">Amino-acid degradation; L-histidine degradation into L-glutamate; N-formimidoyl-L-glutamate from L-histidine: step 1/3.</text>
</comment>
<comment type="subcellular location">
    <subcellularLocation>
        <location evidence="1">Cytoplasm</location>
    </subcellularLocation>
</comment>
<comment type="PTM">
    <text evidence="1">Contains an active site 4-methylidene-imidazol-5-one (MIO), which is formed autocatalytically by cyclization and dehydration of residues Ala-Ser-Gly.</text>
</comment>
<comment type="similarity">
    <text evidence="1">Belongs to the PAL/histidase family.</text>
</comment>
<evidence type="ECO:0000255" key="1">
    <source>
        <dbReference type="HAMAP-Rule" id="MF_00229"/>
    </source>
</evidence>
<proteinExistence type="inferred from homology"/>